<keyword id="KW-0028">Amino-acid biosynthesis</keyword>
<keyword id="KW-0963">Cytoplasm</keyword>
<keyword id="KW-0554">One-carbon metabolism</keyword>
<keyword id="KW-0663">Pyridoxal phosphate</keyword>
<keyword id="KW-1185">Reference proteome</keyword>
<keyword id="KW-0808">Transferase</keyword>
<evidence type="ECO:0000255" key="1">
    <source>
        <dbReference type="HAMAP-Rule" id="MF_00051"/>
    </source>
</evidence>
<feature type="chain" id="PRO_1000091518" description="Serine hydroxymethyltransferase">
    <location>
        <begin position="1"/>
        <end position="433"/>
    </location>
</feature>
<feature type="binding site" evidence="1">
    <location>
        <position position="133"/>
    </location>
    <ligand>
        <name>(6S)-5,6,7,8-tetrahydrofolate</name>
        <dbReference type="ChEBI" id="CHEBI:57453"/>
    </ligand>
</feature>
<feature type="binding site" evidence="1">
    <location>
        <begin position="137"/>
        <end position="139"/>
    </location>
    <ligand>
        <name>(6S)-5,6,7,8-tetrahydrofolate</name>
        <dbReference type="ChEBI" id="CHEBI:57453"/>
    </ligand>
</feature>
<feature type="binding site" evidence="1">
    <location>
        <begin position="366"/>
        <end position="368"/>
    </location>
    <ligand>
        <name>(6S)-5,6,7,8-tetrahydrofolate</name>
        <dbReference type="ChEBI" id="CHEBI:57453"/>
    </ligand>
</feature>
<feature type="site" description="Plays an important role in substrate specificity" evidence="1">
    <location>
        <position position="241"/>
    </location>
</feature>
<feature type="modified residue" description="N6-(pyridoxal phosphate)lysine" evidence="1">
    <location>
        <position position="242"/>
    </location>
</feature>
<proteinExistence type="inferred from homology"/>
<comment type="function">
    <text evidence="1">Catalyzes the reversible interconversion of serine and glycine with tetrahydrofolate (THF) serving as the one-carbon carrier. This reaction serves as the major source of one-carbon groups required for the biosynthesis of purines, thymidylate, methionine, and other important biomolecules. Also exhibits THF-independent aldolase activity toward beta-hydroxyamino acids, producing glycine and aldehydes, via a retro-aldol mechanism.</text>
</comment>
<comment type="catalytic activity">
    <reaction evidence="1">
        <text>(6R)-5,10-methylene-5,6,7,8-tetrahydrofolate + glycine + H2O = (6S)-5,6,7,8-tetrahydrofolate + L-serine</text>
        <dbReference type="Rhea" id="RHEA:15481"/>
        <dbReference type="ChEBI" id="CHEBI:15377"/>
        <dbReference type="ChEBI" id="CHEBI:15636"/>
        <dbReference type="ChEBI" id="CHEBI:33384"/>
        <dbReference type="ChEBI" id="CHEBI:57305"/>
        <dbReference type="ChEBI" id="CHEBI:57453"/>
        <dbReference type="EC" id="2.1.2.1"/>
    </reaction>
</comment>
<comment type="cofactor">
    <cofactor evidence="1">
        <name>pyridoxal 5'-phosphate</name>
        <dbReference type="ChEBI" id="CHEBI:597326"/>
    </cofactor>
</comment>
<comment type="pathway">
    <text evidence="1">One-carbon metabolism; tetrahydrofolate interconversion.</text>
</comment>
<comment type="pathway">
    <text evidence="1">Amino-acid biosynthesis; glycine biosynthesis; glycine from L-serine: step 1/1.</text>
</comment>
<comment type="subunit">
    <text evidence="1">Homodimer.</text>
</comment>
<comment type="subcellular location">
    <subcellularLocation>
        <location evidence="1">Cytoplasm</location>
    </subcellularLocation>
</comment>
<comment type="similarity">
    <text evidence="1">Belongs to the SHMT family.</text>
</comment>
<dbReference type="EC" id="2.1.2.1" evidence="1"/>
<dbReference type="EMBL" id="CP001016">
    <property type="protein sequence ID" value="ACB94867.1"/>
    <property type="molecule type" value="Genomic_DNA"/>
</dbReference>
<dbReference type="RefSeq" id="WP_012384224.1">
    <property type="nucleotide sequence ID" value="NC_010581.1"/>
</dbReference>
<dbReference type="SMR" id="B2IJJ3"/>
<dbReference type="STRING" id="395963.Bind_1225"/>
<dbReference type="KEGG" id="bid:Bind_1225"/>
<dbReference type="eggNOG" id="COG0112">
    <property type="taxonomic scope" value="Bacteria"/>
</dbReference>
<dbReference type="HOGENOM" id="CLU_022477_2_1_5"/>
<dbReference type="OrthoDB" id="9803846at2"/>
<dbReference type="UniPathway" id="UPA00193"/>
<dbReference type="UniPathway" id="UPA00288">
    <property type="reaction ID" value="UER01023"/>
</dbReference>
<dbReference type="Proteomes" id="UP000001695">
    <property type="component" value="Chromosome"/>
</dbReference>
<dbReference type="GO" id="GO:0005829">
    <property type="term" value="C:cytosol"/>
    <property type="evidence" value="ECO:0007669"/>
    <property type="project" value="TreeGrafter"/>
</dbReference>
<dbReference type="GO" id="GO:0004372">
    <property type="term" value="F:glycine hydroxymethyltransferase activity"/>
    <property type="evidence" value="ECO:0007669"/>
    <property type="project" value="UniProtKB-UniRule"/>
</dbReference>
<dbReference type="GO" id="GO:0030170">
    <property type="term" value="F:pyridoxal phosphate binding"/>
    <property type="evidence" value="ECO:0007669"/>
    <property type="project" value="UniProtKB-UniRule"/>
</dbReference>
<dbReference type="GO" id="GO:0019264">
    <property type="term" value="P:glycine biosynthetic process from serine"/>
    <property type="evidence" value="ECO:0007669"/>
    <property type="project" value="UniProtKB-UniRule"/>
</dbReference>
<dbReference type="GO" id="GO:0035999">
    <property type="term" value="P:tetrahydrofolate interconversion"/>
    <property type="evidence" value="ECO:0007669"/>
    <property type="project" value="UniProtKB-UniRule"/>
</dbReference>
<dbReference type="CDD" id="cd00378">
    <property type="entry name" value="SHMT"/>
    <property type="match status" value="1"/>
</dbReference>
<dbReference type="FunFam" id="3.40.640.10:FF:000001">
    <property type="entry name" value="Serine hydroxymethyltransferase"/>
    <property type="match status" value="1"/>
</dbReference>
<dbReference type="Gene3D" id="3.90.1150.10">
    <property type="entry name" value="Aspartate Aminotransferase, domain 1"/>
    <property type="match status" value="1"/>
</dbReference>
<dbReference type="Gene3D" id="3.40.640.10">
    <property type="entry name" value="Type I PLP-dependent aspartate aminotransferase-like (Major domain)"/>
    <property type="match status" value="1"/>
</dbReference>
<dbReference type="HAMAP" id="MF_00051">
    <property type="entry name" value="SHMT"/>
    <property type="match status" value="1"/>
</dbReference>
<dbReference type="InterPro" id="IPR015424">
    <property type="entry name" value="PyrdxlP-dep_Trfase"/>
</dbReference>
<dbReference type="InterPro" id="IPR015421">
    <property type="entry name" value="PyrdxlP-dep_Trfase_major"/>
</dbReference>
<dbReference type="InterPro" id="IPR015422">
    <property type="entry name" value="PyrdxlP-dep_Trfase_small"/>
</dbReference>
<dbReference type="InterPro" id="IPR001085">
    <property type="entry name" value="Ser_HO-MeTrfase"/>
</dbReference>
<dbReference type="InterPro" id="IPR049943">
    <property type="entry name" value="Ser_HO-MeTrfase-like"/>
</dbReference>
<dbReference type="InterPro" id="IPR019798">
    <property type="entry name" value="Ser_HO-MeTrfase_PLP_BS"/>
</dbReference>
<dbReference type="InterPro" id="IPR039429">
    <property type="entry name" value="SHMT-like_dom"/>
</dbReference>
<dbReference type="NCBIfam" id="NF000586">
    <property type="entry name" value="PRK00011.1"/>
    <property type="match status" value="1"/>
</dbReference>
<dbReference type="PANTHER" id="PTHR11680">
    <property type="entry name" value="SERINE HYDROXYMETHYLTRANSFERASE"/>
    <property type="match status" value="1"/>
</dbReference>
<dbReference type="PANTHER" id="PTHR11680:SF35">
    <property type="entry name" value="SERINE HYDROXYMETHYLTRANSFERASE 1"/>
    <property type="match status" value="1"/>
</dbReference>
<dbReference type="Pfam" id="PF00464">
    <property type="entry name" value="SHMT"/>
    <property type="match status" value="1"/>
</dbReference>
<dbReference type="PIRSF" id="PIRSF000412">
    <property type="entry name" value="SHMT"/>
    <property type="match status" value="1"/>
</dbReference>
<dbReference type="SUPFAM" id="SSF53383">
    <property type="entry name" value="PLP-dependent transferases"/>
    <property type="match status" value="1"/>
</dbReference>
<dbReference type="PROSITE" id="PS00096">
    <property type="entry name" value="SHMT"/>
    <property type="match status" value="1"/>
</dbReference>
<name>GLYA_BEII9</name>
<reference key="1">
    <citation type="journal article" date="2010" name="J. Bacteriol.">
        <title>Complete genome sequence of Beijerinckia indica subsp. indica.</title>
        <authorList>
            <person name="Tamas I."/>
            <person name="Dedysh S.N."/>
            <person name="Liesack W."/>
            <person name="Stott M.B."/>
            <person name="Alam M."/>
            <person name="Murrell J.C."/>
            <person name="Dunfield P.F."/>
        </authorList>
    </citation>
    <scope>NUCLEOTIDE SEQUENCE [LARGE SCALE GENOMIC DNA]</scope>
    <source>
        <strain>ATCC 9039 / DSM 1715 / NCIMB 8712</strain>
    </source>
</reference>
<gene>
    <name evidence="1" type="primary">glyA</name>
    <name type="ordered locus">Bind_1225</name>
</gene>
<protein>
    <recommendedName>
        <fullName evidence="1">Serine hydroxymethyltransferase</fullName>
        <shortName evidence="1">SHMT</shortName>
        <shortName evidence="1">Serine methylase</shortName>
        <ecNumber evidence="1">2.1.2.1</ecNumber>
    </recommendedName>
</protein>
<sequence>MNAKVEVGQPAANSFFAANLADADPEIAKAIELELGRQRHEIELIASENIVSKAVLEAQGSIMTNKYAEGYPGKRYYGGCQFVDIAENLAIERVRKLFDCQFANVQPNSGSQANQAVFLALLQPGDVFMGLDLAAGGHLTHGSPVNLSGKWFKAVSYGVRQSDHLIDMDAVEALAKEHKPKLIIAGGSAYPRHWDFARFRAIADSVGAYFFVDMAHFAGLVAGGAHPSPFPHAHVVTSTTHKTLRGPRGGLVLTNDADIAKKINSAVFPGLQGGPLMHVIAAKAVAFGEALRPDFRLYAQQVVVNAGTLASRLVEKGFAISSGGTDNHLMLVDLRPKQLTGKAAEAALGRASITCNKNGVPFDTASPFVTSGIRLGSPAATSRGFGTKEFQDVADLIAETLDGLAKNGEEGNAAVEASVKERAIALTQRFPIY</sequence>
<accession>B2IJJ3</accession>
<organism>
    <name type="scientific">Beijerinckia indica subsp. indica (strain ATCC 9039 / DSM 1715 / NCIMB 8712)</name>
    <dbReference type="NCBI Taxonomy" id="395963"/>
    <lineage>
        <taxon>Bacteria</taxon>
        <taxon>Pseudomonadati</taxon>
        <taxon>Pseudomonadota</taxon>
        <taxon>Alphaproteobacteria</taxon>
        <taxon>Hyphomicrobiales</taxon>
        <taxon>Beijerinckiaceae</taxon>
        <taxon>Beijerinckia</taxon>
    </lineage>
</organism>